<accession>B5RG82</accession>
<evidence type="ECO:0000255" key="1">
    <source>
        <dbReference type="HAMAP-Rule" id="MF_00161"/>
    </source>
</evidence>
<gene>
    <name evidence="1" type="primary">lspA</name>
    <name type="ordered locus">SG0050</name>
</gene>
<dbReference type="EC" id="3.4.23.36" evidence="1"/>
<dbReference type="EMBL" id="AM933173">
    <property type="protein sequence ID" value="CAR35958.1"/>
    <property type="molecule type" value="Genomic_DNA"/>
</dbReference>
<dbReference type="RefSeq" id="WP_000042739.1">
    <property type="nucleotide sequence ID" value="NC_011274.1"/>
</dbReference>
<dbReference type="SMR" id="B5RG82"/>
<dbReference type="MEROPS" id="A08.001"/>
<dbReference type="KEGG" id="seg:SG0050"/>
<dbReference type="HOGENOM" id="CLU_083252_4_0_6"/>
<dbReference type="UniPathway" id="UPA00665"/>
<dbReference type="Proteomes" id="UP000008321">
    <property type="component" value="Chromosome"/>
</dbReference>
<dbReference type="GO" id="GO:0005886">
    <property type="term" value="C:plasma membrane"/>
    <property type="evidence" value="ECO:0007669"/>
    <property type="project" value="UniProtKB-SubCell"/>
</dbReference>
<dbReference type="GO" id="GO:0004190">
    <property type="term" value="F:aspartic-type endopeptidase activity"/>
    <property type="evidence" value="ECO:0007669"/>
    <property type="project" value="UniProtKB-UniRule"/>
</dbReference>
<dbReference type="GO" id="GO:0006508">
    <property type="term" value="P:proteolysis"/>
    <property type="evidence" value="ECO:0007669"/>
    <property type="project" value="UniProtKB-KW"/>
</dbReference>
<dbReference type="HAMAP" id="MF_00161">
    <property type="entry name" value="LspA"/>
    <property type="match status" value="1"/>
</dbReference>
<dbReference type="InterPro" id="IPR001872">
    <property type="entry name" value="Peptidase_A8"/>
</dbReference>
<dbReference type="NCBIfam" id="TIGR00077">
    <property type="entry name" value="lspA"/>
    <property type="match status" value="1"/>
</dbReference>
<dbReference type="PANTHER" id="PTHR33695">
    <property type="entry name" value="LIPOPROTEIN SIGNAL PEPTIDASE"/>
    <property type="match status" value="1"/>
</dbReference>
<dbReference type="PANTHER" id="PTHR33695:SF1">
    <property type="entry name" value="LIPOPROTEIN SIGNAL PEPTIDASE"/>
    <property type="match status" value="1"/>
</dbReference>
<dbReference type="Pfam" id="PF01252">
    <property type="entry name" value="Peptidase_A8"/>
    <property type="match status" value="1"/>
</dbReference>
<dbReference type="PRINTS" id="PR00781">
    <property type="entry name" value="LIPOSIGPTASE"/>
</dbReference>
<dbReference type="PROSITE" id="PS00855">
    <property type="entry name" value="SPASE_II"/>
    <property type="match status" value="1"/>
</dbReference>
<organism>
    <name type="scientific">Salmonella gallinarum (strain 287/91 / NCTC 13346)</name>
    <dbReference type="NCBI Taxonomy" id="550538"/>
    <lineage>
        <taxon>Bacteria</taxon>
        <taxon>Pseudomonadati</taxon>
        <taxon>Pseudomonadota</taxon>
        <taxon>Gammaproteobacteria</taxon>
        <taxon>Enterobacterales</taxon>
        <taxon>Enterobacteriaceae</taxon>
        <taxon>Salmonella</taxon>
    </lineage>
</organism>
<sequence length="166" mass="18339">MSKPLCSTGLRWLWLVVVVLIIDLGSKYLILQNFALGDTVGLFPSLNLHYARNYGAAFSFLADSGGWQRWFFAGIAIGICVILLVMMYRSKATQKLNNIAYALIIGGALGNLFDRLWHGFVVDMIDFYVGNWHFATFNLADSAICIGAALIVLEGFLPKPTAKEQA</sequence>
<name>LSPA_SALG2</name>
<keyword id="KW-0064">Aspartyl protease</keyword>
<keyword id="KW-0997">Cell inner membrane</keyword>
<keyword id="KW-1003">Cell membrane</keyword>
<keyword id="KW-0378">Hydrolase</keyword>
<keyword id="KW-0472">Membrane</keyword>
<keyword id="KW-0645">Protease</keyword>
<keyword id="KW-0812">Transmembrane</keyword>
<keyword id="KW-1133">Transmembrane helix</keyword>
<protein>
    <recommendedName>
        <fullName evidence="1">Lipoprotein signal peptidase</fullName>
        <ecNumber evidence="1">3.4.23.36</ecNumber>
    </recommendedName>
    <alternativeName>
        <fullName evidence="1">Prolipoprotein signal peptidase</fullName>
    </alternativeName>
    <alternativeName>
        <fullName evidence="1">Signal peptidase II</fullName>
        <shortName evidence="1">SPase II</shortName>
    </alternativeName>
</protein>
<comment type="function">
    <text evidence="1">This protein specifically catalyzes the removal of signal peptides from prolipoproteins.</text>
</comment>
<comment type="catalytic activity">
    <reaction evidence="1">
        <text>Release of signal peptides from bacterial membrane prolipoproteins. Hydrolyzes -Xaa-Yaa-Zaa-|-(S,diacylglyceryl)Cys-, in which Xaa is hydrophobic (preferably Leu), and Yaa (Ala or Ser) and Zaa (Gly or Ala) have small, neutral side chains.</text>
        <dbReference type="EC" id="3.4.23.36"/>
    </reaction>
</comment>
<comment type="pathway">
    <text evidence="1">Protein modification; lipoprotein biosynthesis (signal peptide cleavage).</text>
</comment>
<comment type="subcellular location">
    <subcellularLocation>
        <location evidence="1">Cell inner membrane</location>
        <topology evidence="1">Multi-pass membrane protein</topology>
    </subcellularLocation>
</comment>
<comment type="similarity">
    <text evidence="1">Belongs to the peptidase A8 family.</text>
</comment>
<reference key="1">
    <citation type="journal article" date="2008" name="Genome Res.">
        <title>Comparative genome analysis of Salmonella enteritidis PT4 and Salmonella gallinarum 287/91 provides insights into evolutionary and host adaptation pathways.</title>
        <authorList>
            <person name="Thomson N.R."/>
            <person name="Clayton D.J."/>
            <person name="Windhorst D."/>
            <person name="Vernikos G."/>
            <person name="Davidson S."/>
            <person name="Churcher C."/>
            <person name="Quail M.A."/>
            <person name="Stevens M."/>
            <person name="Jones M.A."/>
            <person name="Watson M."/>
            <person name="Barron A."/>
            <person name="Layton A."/>
            <person name="Pickard D."/>
            <person name="Kingsley R.A."/>
            <person name="Bignell A."/>
            <person name="Clark L."/>
            <person name="Harris B."/>
            <person name="Ormond D."/>
            <person name="Abdellah Z."/>
            <person name="Brooks K."/>
            <person name="Cherevach I."/>
            <person name="Chillingworth T."/>
            <person name="Woodward J."/>
            <person name="Norberczak H."/>
            <person name="Lord A."/>
            <person name="Arrowsmith C."/>
            <person name="Jagels K."/>
            <person name="Moule S."/>
            <person name="Mungall K."/>
            <person name="Saunders M."/>
            <person name="Whitehead S."/>
            <person name="Chabalgoity J.A."/>
            <person name="Maskell D."/>
            <person name="Humphreys T."/>
            <person name="Roberts M."/>
            <person name="Barrow P.A."/>
            <person name="Dougan G."/>
            <person name="Parkhill J."/>
        </authorList>
    </citation>
    <scope>NUCLEOTIDE SEQUENCE [LARGE SCALE GENOMIC DNA]</scope>
    <source>
        <strain>287/91 / NCTC 13346</strain>
    </source>
</reference>
<proteinExistence type="inferred from homology"/>
<feature type="chain" id="PRO_1000097276" description="Lipoprotein signal peptidase">
    <location>
        <begin position="1"/>
        <end position="166"/>
    </location>
</feature>
<feature type="transmembrane region" description="Helical" evidence="1">
    <location>
        <begin position="12"/>
        <end position="32"/>
    </location>
</feature>
<feature type="transmembrane region" description="Helical" evidence="1">
    <location>
        <begin position="70"/>
        <end position="90"/>
    </location>
</feature>
<feature type="transmembrane region" description="Helical" evidence="1">
    <location>
        <begin position="102"/>
        <end position="122"/>
    </location>
</feature>
<feature type="transmembrane region" description="Helical" evidence="1">
    <location>
        <begin position="137"/>
        <end position="157"/>
    </location>
</feature>
<feature type="active site" evidence="1">
    <location>
        <position position="123"/>
    </location>
</feature>
<feature type="active site" evidence="1">
    <location>
        <position position="141"/>
    </location>
</feature>